<accession>P84897</accession>
<evidence type="ECO:0000250" key="1"/>
<evidence type="ECO:0000269" key="2">
    <source>
    </source>
</evidence>
<evidence type="ECO:0000305" key="3"/>
<dbReference type="GO" id="GO:0005576">
    <property type="term" value="C:extracellular region"/>
    <property type="evidence" value="ECO:0007669"/>
    <property type="project" value="UniProtKB-SubCell"/>
</dbReference>
<dbReference type="GO" id="GO:0090729">
    <property type="term" value="F:toxin activity"/>
    <property type="evidence" value="ECO:0007669"/>
    <property type="project" value="UniProtKB-KW"/>
</dbReference>
<dbReference type="GO" id="GO:0006952">
    <property type="term" value="P:defense response"/>
    <property type="evidence" value="ECO:0007669"/>
    <property type="project" value="UniProtKB-KW"/>
</dbReference>
<dbReference type="GO" id="GO:0042311">
    <property type="term" value="P:vasodilation"/>
    <property type="evidence" value="ECO:0007669"/>
    <property type="project" value="UniProtKB-KW"/>
</dbReference>
<organism>
    <name type="scientific">Pithecopus hypochondrialis</name>
    <name type="common">Orange-legged leaf frog</name>
    <name type="synonym">Phyllomedusa hypochondrialis</name>
    <dbReference type="NCBI Taxonomy" id="317381"/>
    <lineage>
        <taxon>Eukaryota</taxon>
        <taxon>Metazoa</taxon>
        <taxon>Chordata</taxon>
        <taxon>Craniata</taxon>
        <taxon>Vertebrata</taxon>
        <taxon>Euteleostomi</taxon>
        <taxon>Amphibia</taxon>
        <taxon>Batrachia</taxon>
        <taxon>Anura</taxon>
        <taxon>Neobatrachia</taxon>
        <taxon>Hyloidea</taxon>
        <taxon>Hylidae</taxon>
        <taxon>Phyllomedusinae</taxon>
        <taxon>Pithecopus</taxon>
    </lineage>
</organism>
<reference evidence="3" key="1">
    <citation type="journal article" date="2006" name="Peptides">
        <title>Bradykinin-related peptides from Phyllomedusa hypochondrialis.</title>
        <authorList>
            <person name="Brand G.D."/>
            <person name="Krause F.C."/>
            <person name="Silva L.P."/>
            <person name="Leite J.R.S.A."/>
            <person name="Melo J.A.T."/>
            <person name="Prates M.V."/>
            <person name="Pesquero J.B."/>
            <person name="Santos E.L."/>
            <person name="Nakaie C.R."/>
            <person name="Costa-Neto C.M."/>
            <person name="Bloch C. Jr."/>
        </authorList>
    </citation>
    <scope>PROTEIN SEQUENCE</scope>
    <scope>MASS SPECTROMETRY</scope>
    <scope>HYDROXYLATION AT PRO-2</scope>
    <source>
        <tissue evidence="2">Skin secretion</tissue>
    </source>
</reference>
<sequence>VPPGFTPFRQ</sequence>
<feature type="peptide" id="PRO_0000248467" description="[Val1,Hyp2,Thr6]-bradykinyl-Gln" evidence="2">
    <location>
        <begin position="1"/>
        <end position="10"/>
    </location>
</feature>
<feature type="modified residue" description="4-hydroxyproline" evidence="2">
    <location>
        <position position="2"/>
    </location>
</feature>
<keyword id="KW-0878">Amphibian defense peptide</keyword>
<keyword id="KW-0903">Direct protein sequencing</keyword>
<keyword id="KW-1213">G-protein coupled receptor impairing toxin</keyword>
<keyword id="KW-0379">Hydroxylation</keyword>
<keyword id="KW-0964">Secreted</keyword>
<keyword id="KW-0800">Toxin</keyword>
<keyword id="KW-0838">Vasoactive</keyword>
<keyword id="KW-0840">Vasodilator</keyword>
<comment type="function">
    <text evidence="1">Produces in vitro relaxation of rat arterial smooth muscle and constriction of intestinal smooth muscle (By similarity). May target bradykinin receptors (BDKRB).</text>
</comment>
<comment type="subcellular location">
    <subcellularLocation>
        <location>Secreted</location>
    </subcellularLocation>
</comment>
<comment type="tissue specificity">
    <text evidence="2">Expressed by the skin glands.</text>
</comment>
<comment type="mass spectrometry"/>
<comment type="similarity">
    <text evidence="3">Belongs to the bradykinin-related peptide family.</text>
</comment>
<proteinExistence type="evidence at protein level"/>
<protein>
    <recommendedName>
        <fullName>[Val1,Hyp2,Thr6]-bradykinyl-Gln</fullName>
    </recommendedName>
</protein>
<name>BRK6_PITHY</name>